<accession>C3N789</accession>
<organism>
    <name type="scientific">Saccharolobus islandicus (strain Y.G.57.14 / Yellowstone #1)</name>
    <name type="common">Sulfolobus islandicus</name>
    <dbReference type="NCBI Taxonomy" id="439386"/>
    <lineage>
        <taxon>Archaea</taxon>
        <taxon>Thermoproteota</taxon>
        <taxon>Thermoprotei</taxon>
        <taxon>Sulfolobales</taxon>
        <taxon>Sulfolobaceae</taxon>
        <taxon>Saccharolobus</taxon>
    </lineage>
</organism>
<proteinExistence type="inferred from homology"/>
<reference key="1">
    <citation type="journal article" date="2009" name="Proc. Natl. Acad. Sci. U.S.A.">
        <title>Biogeography of the Sulfolobus islandicus pan-genome.</title>
        <authorList>
            <person name="Reno M.L."/>
            <person name="Held N.L."/>
            <person name="Fields C.J."/>
            <person name="Burke P.V."/>
            <person name="Whitaker R.J."/>
        </authorList>
    </citation>
    <scope>NUCLEOTIDE SEQUENCE [LARGE SCALE GENOMIC DNA]</scope>
    <source>
        <strain>Y.G.57.14 / Yellowstone #1</strain>
    </source>
</reference>
<evidence type="ECO:0000255" key="1">
    <source>
        <dbReference type="HAMAP-Rule" id="MF_00721"/>
    </source>
</evidence>
<evidence type="ECO:0000305" key="2"/>
<sequence>MPAIEVGRICVKVKGREAGSKCVIVDIIDDNFVLVTGPKDISGVKRRRVNILHLEPTDKKIDIQKGASDEEVRKKIEEAGLTEYMKERIKIKIPTL</sequence>
<name>RL14E_SACI7</name>
<keyword id="KW-0687">Ribonucleoprotein</keyword>
<keyword id="KW-0689">Ribosomal protein</keyword>
<comment type="similarity">
    <text evidence="1">Belongs to the eukaryotic ribosomal protein eL14 family.</text>
</comment>
<dbReference type="EMBL" id="CP001403">
    <property type="protein sequence ID" value="ACP46083.1"/>
    <property type="molecule type" value="Genomic_DNA"/>
</dbReference>
<dbReference type="RefSeq" id="WP_012713922.1">
    <property type="nucleotide sequence ID" value="NC_012622.1"/>
</dbReference>
<dbReference type="SMR" id="C3N789"/>
<dbReference type="KEGG" id="siy:YG5714_1826"/>
<dbReference type="HOGENOM" id="CLU_183474_0_0_2"/>
<dbReference type="Proteomes" id="UP000002308">
    <property type="component" value="Chromosome"/>
</dbReference>
<dbReference type="GO" id="GO:0022625">
    <property type="term" value="C:cytosolic large ribosomal subunit"/>
    <property type="evidence" value="ECO:0007669"/>
    <property type="project" value="TreeGrafter"/>
</dbReference>
<dbReference type="GO" id="GO:0003723">
    <property type="term" value="F:RNA binding"/>
    <property type="evidence" value="ECO:0007669"/>
    <property type="project" value="InterPro"/>
</dbReference>
<dbReference type="GO" id="GO:0003735">
    <property type="term" value="F:structural constituent of ribosome"/>
    <property type="evidence" value="ECO:0007669"/>
    <property type="project" value="InterPro"/>
</dbReference>
<dbReference type="GO" id="GO:0042273">
    <property type="term" value="P:ribosomal large subunit biogenesis"/>
    <property type="evidence" value="ECO:0007669"/>
    <property type="project" value="TreeGrafter"/>
</dbReference>
<dbReference type="GO" id="GO:0006412">
    <property type="term" value="P:translation"/>
    <property type="evidence" value="ECO:0007669"/>
    <property type="project" value="UniProtKB-UniRule"/>
</dbReference>
<dbReference type="CDD" id="cd23702">
    <property type="entry name" value="eL14"/>
    <property type="match status" value="1"/>
</dbReference>
<dbReference type="FunFam" id="2.30.30.30:FF:000045">
    <property type="entry name" value="50S ribosomal protein L14e"/>
    <property type="match status" value="1"/>
</dbReference>
<dbReference type="Gene3D" id="2.30.30.30">
    <property type="match status" value="1"/>
</dbReference>
<dbReference type="HAMAP" id="MF_00721">
    <property type="entry name" value="Ribosomal_eL14"/>
    <property type="match status" value="1"/>
</dbReference>
<dbReference type="InterPro" id="IPR014722">
    <property type="entry name" value="Rib_uL2_dom2"/>
</dbReference>
<dbReference type="InterPro" id="IPR039660">
    <property type="entry name" value="Ribosomal_eL14"/>
</dbReference>
<dbReference type="InterPro" id="IPR023651">
    <property type="entry name" value="Ribosomal_eL14_arc"/>
</dbReference>
<dbReference type="InterPro" id="IPR008991">
    <property type="entry name" value="Translation_prot_SH3-like_sf"/>
</dbReference>
<dbReference type="NCBIfam" id="NF003320">
    <property type="entry name" value="PRK04333.1"/>
    <property type="match status" value="1"/>
</dbReference>
<dbReference type="PANTHER" id="PTHR11127">
    <property type="entry name" value="60S RIBOSOMAL PROTEIN L14"/>
    <property type="match status" value="1"/>
</dbReference>
<dbReference type="PANTHER" id="PTHR11127:SF2">
    <property type="entry name" value="LARGE RIBOSOMAL SUBUNIT PROTEIN EL14"/>
    <property type="match status" value="1"/>
</dbReference>
<dbReference type="SUPFAM" id="SSF50104">
    <property type="entry name" value="Translation proteins SH3-like domain"/>
    <property type="match status" value="1"/>
</dbReference>
<gene>
    <name evidence="1" type="primary">rpl14e</name>
    <name type="ordered locus">YG5714_1826</name>
</gene>
<protein>
    <recommendedName>
        <fullName evidence="1">Large ribosomal subunit protein eL14</fullName>
    </recommendedName>
    <alternativeName>
        <fullName evidence="2">50S ribosomal protein L14e</fullName>
    </alternativeName>
</protein>
<feature type="chain" id="PRO_1000212710" description="Large ribosomal subunit protein eL14">
    <location>
        <begin position="1"/>
        <end position="96"/>
    </location>
</feature>